<comment type="function">
    <text evidence="1">Involved in the binding of tRNA to the ribosomes.</text>
</comment>
<comment type="subunit">
    <text evidence="1">Part of the 30S ribosomal subunit.</text>
</comment>
<comment type="similarity">
    <text evidence="1">Belongs to the universal ribosomal protein uS10 family.</text>
</comment>
<feature type="chain" id="PRO_1000127179" description="Small ribosomal subunit protein uS10">
    <location>
        <begin position="1"/>
        <end position="103"/>
    </location>
</feature>
<reference key="1">
    <citation type="journal article" date="2011" name="J. Bacteriol.">
        <title>Comparative genomics of 28 Salmonella enterica isolates: evidence for CRISPR-mediated adaptive sublineage evolution.</title>
        <authorList>
            <person name="Fricke W.F."/>
            <person name="Mammel M.K."/>
            <person name="McDermott P.F."/>
            <person name="Tartera C."/>
            <person name="White D.G."/>
            <person name="Leclerc J.E."/>
            <person name="Ravel J."/>
            <person name="Cebula T.A."/>
        </authorList>
    </citation>
    <scope>NUCLEOTIDE SEQUENCE [LARGE SCALE GENOMIC DNA]</scope>
    <source>
        <strain>SL476</strain>
    </source>
</reference>
<proteinExistence type="inferred from homology"/>
<dbReference type="EMBL" id="CP001120">
    <property type="protein sequence ID" value="ACF67214.1"/>
    <property type="molecule type" value="Genomic_DNA"/>
</dbReference>
<dbReference type="RefSeq" id="WP_001181005.1">
    <property type="nucleotide sequence ID" value="NC_011083.1"/>
</dbReference>
<dbReference type="SMR" id="B4TKL6"/>
<dbReference type="GeneID" id="98390443"/>
<dbReference type="KEGG" id="seh:SeHA_C3745"/>
<dbReference type="HOGENOM" id="CLU_122625_1_3_6"/>
<dbReference type="Proteomes" id="UP000001866">
    <property type="component" value="Chromosome"/>
</dbReference>
<dbReference type="GO" id="GO:1990904">
    <property type="term" value="C:ribonucleoprotein complex"/>
    <property type="evidence" value="ECO:0007669"/>
    <property type="project" value="UniProtKB-KW"/>
</dbReference>
<dbReference type="GO" id="GO:0005840">
    <property type="term" value="C:ribosome"/>
    <property type="evidence" value="ECO:0007669"/>
    <property type="project" value="UniProtKB-KW"/>
</dbReference>
<dbReference type="GO" id="GO:0003735">
    <property type="term" value="F:structural constituent of ribosome"/>
    <property type="evidence" value="ECO:0007669"/>
    <property type="project" value="InterPro"/>
</dbReference>
<dbReference type="GO" id="GO:0000049">
    <property type="term" value="F:tRNA binding"/>
    <property type="evidence" value="ECO:0007669"/>
    <property type="project" value="UniProtKB-UniRule"/>
</dbReference>
<dbReference type="GO" id="GO:0006412">
    <property type="term" value="P:translation"/>
    <property type="evidence" value="ECO:0007669"/>
    <property type="project" value="UniProtKB-UniRule"/>
</dbReference>
<dbReference type="FunFam" id="3.30.70.600:FF:000001">
    <property type="entry name" value="30S ribosomal protein S10"/>
    <property type="match status" value="1"/>
</dbReference>
<dbReference type="Gene3D" id="3.30.70.600">
    <property type="entry name" value="Ribosomal protein S10 domain"/>
    <property type="match status" value="1"/>
</dbReference>
<dbReference type="HAMAP" id="MF_00508">
    <property type="entry name" value="Ribosomal_uS10"/>
    <property type="match status" value="1"/>
</dbReference>
<dbReference type="InterPro" id="IPR001848">
    <property type="entry name" value="Ribosomal_uS10"/>
</dbReference>
<dbReference type="InterPro" id="IPR018268">
    <property type="entry name" value="Ribosomal_uS10_CS"/>
</dbReference>
<dbReference type="InterPro" id="IPR027486">
    <property type="entry name" value="Ribosomal_uS10_dom"/>
</dbReference>
<dbReference type="InterPro" id="IPR036838">
    <property type="entry name" value="Ribosomal_uS10_dom_sf"/>
</dbReference>
<dbReference type="NCBIfam" id="NF001861">
    <property type="entry name" value="PRK00596.1"/>
    <property type="match status" value="1"/>
</dbReference>
<dbReference type="NCBIfam" id="TIGR01049">
    <property type="entry name" value="rpsJ_bact"/>
    <property type="match status" value="1"/>
</dbReference>
<dbReference type="PANTHER" id="PTHR11700">
    <property type="entry name" value="30S RIBOSOMAL PROTEIN S10 FAMILY MEMBER"/>
    <property type="match status" value="1"/>
</dbReference>
<dbReference type="Pfam" id="PF00338">
    <property type="entry name" value="Ribosomal_S10"/>
    <property type="match status" value="1"/>
</dbReference>
<dbReference type="PRINTS" id="PR00971">
    <property type="entry name" value="RIBOSOMALS10"/>
</dbReference>
<dbReference type="SMART" id="SM01403">
    <property type="entry name" value="Ribosomal_S10"/>
    <property type="match status" value="1"/>
</dbReference>
<dbReference type="SUPFAM" id="SSF54999">
    <property type="entry name" value="Ribosomal protein S10"/>
    <property type="match status" value="1"/>
</dbReference>
<dbReference type="PROSITE" id="PS00361">
    <property type="entry name" value="RIBOSOMAL_S10"/>
    <property type="match status" value="1"/>
</dbReference>
<organism>
    <name type="scientific">Salmonella heidelberg (strain SL476)</name>
    <dbReference type="NCBI Taxonomy" id="454169"/>
    <lineage>
        <taxon>Bacteria</taxon>
        <taxon>Pseudomonadati</taxon>
        <taxon>Pseudomonadota</taxon>
        <taxon>Gammaproteobacteria</taxon>
        <taxon>Enterobacterales</taxon>
        <taxon>Enterobacteriaceae</taxon>
        <taxon>Salmonella</taxon>
    </lineage>
</organism>
<name>RS10_SALHS</name>
<sequence>MQNQRIRIRLKAFDHRLIDQSTAEIVETAKRTGAQVRGPIPLPTRKERFTVLISPHVNKDARDQYEIRTHKRLVDIVEPTEKTVDALMRLDLAAGVDVQISLG</sequence>
<gene>
    <name evidence="1" type="primary">rpsJ</name>
    <name type="ordered locus">SeHA_C3745</name>
</gene>
<evidence type="ECO:0000255" key="1">
    <source>
        <dbReference type="HAMAP-Rule" id="MF_00508"/>
    </source>
</evidence>
<evidence type="ECO:0000305" key="2"/>
<accession>B4TKL6</accession>
<protein>
    <recommendedName>
        <fullName evidence="1">Small ribosomal subunit protein uS10</fullName>
    </recommendedName>
    <alternativeName>
        <fullName evidence="2">30S ribosomal protein S10</fullName>
    </alternativeName>
</protein>
<keyword id="KW-0687">Ribonucleoprotein</keyword>
<keyword id="KW-0689">Ribosomal protein</keyword>